<gene>
    <name evidence="1" type="primary">rpsD</name>
    <name type="ordered locus">Cbei_0179</name>
</gene>
<reference key="1">
    <citation type="submission" date="2007-06" db="EMBL/GenBank/DDBJ databases">
        <title>Complete sequence of Clostridium beijerinckii NCIMB 8052.</title>
        <authorList>
            <consortium name="US DOE Joint Genome Institute"/>
            <person name="Copeland A."/>
            <person name="Lucas S."/>
            <person name="Lapidus A."/>
            <person name="Barry K."/>
            <person name="Detter J.C."/>
            <person name="Glavina del Rio T."/>
            <person name="Hammon N."/>
            <person name="Israni S."/>
            <person name="Dalin E."/>
            <person name="Tice H."/>
            <person name="Pitluck S."/>
            <person name="Sims D."/>
            <person name="Brettin T."/>
            <person name="Bruce D."/>
            <person name="Tapia R."/>
            <person name="Brainard J."/>
            <person name="Schmutz J."/>
            <person name="Larimer F."/>
            <person name="Land M."/>
            <person name="Hauser L."/>
            <person name="Kyrpides N."/>
            <person name="Mikhailova N."/>
            <person name="Bennet G."/>
            <person name="Cann I."/>
            <person name="Chen J.-S."/>
            <person name="Contreras A.L."/>
            <person name="Jones D."/>
            <person name="Kashket E."/>
            <person name="Mitchell W."/>
            <person name="Stoddard S."/>
            <person name="Schwarz W."/>
            <person name="Qureshi N."/>
            <person name="Young M."/>
            <person name="Shi Z."/>
            <person name="Ezeji T."/>
            <person name="White B."/>
            <person name="Blaschek H."/>
            <person name="Richardson P."/>
        </authorList>
    </citation>
    <scope>NUCLEOTIDE SEQUENCE [LARGE SCALE GENOMIC DNA]</scope>
    <source>
        <strain>ATCC 51743 / NCIMB 8052</strain>
    </source>
</reference>
<dbReference type="EMBL" id="CP000721">
    <property type="protein sequence ID" value="ABR32369.1"/>
    <property type="molecule type" value="Genomic_DNA"/>
</dbReference>
<dbReference type="RefSeq" id="WP_011967532.1">
    <property type="nucleotide sequence ID" value="NC_009617.1"/>
</dbReference>
<dbReference type="SMR" id="A6LPT9"/>
<dbReference type="GeneID" id="66343069"/>
<dbReference type="KEGG" id="cbe:Cbei_0179"/>
<dbReference type="eggNOG" id="COG0522">
    <property type="taxonomic scope" value="Bacteria"/>
</dbReference>
<dbReference type="HOGENOM" id="CLU_092403_0_2_9"/>
<dbReference type="Proteomes" id="UP000000565">
    <property type="component" value="Chromosome"/>
</dbReference>
<dbReference type="GO" id="GO:0015935">
    <property type="term" value="C:small ribosomal subunit"/>
    <property type="evidence" value="ECO:0007669"/>
    <property type="project" value="InterPro"/>
</dbReference>
<dbReference type="GO" id="GO:0019843">
    <property type="term" value="F:rRNA binding"/>
    <property type="evidence" value="ECO:0007669"/>
    <property type="project" value="UniProtKB-UniRule"/>
</dbReference>
<dbReference type="GO" id="GO:0003735">
    <property type="term" value="F:structural constituent of ribosome"/>
    <property type="evidence" value="ECO:0007669"/>
    <property type="project" value="InterPro"/>
</dbReference>
<dbReference type="GO" id="GO:0042274">
    <property type="term" value="P:ribosomal small subunit biogenesis"/>
    <property type="evidence" value="ECO:0007669"/>
    <property type="project" value="TreeGrafter"/>
</dbReference>
<dbReference type="GO" id="GO:0006412">
    <property type="term" value="P:translation"/>
    <property type="evidence" value="ECO:0007669"/>
    <property type="project" value="UniProtKB-UniRule"/>
</dbReference>
<dbReference type="CDD" id="cd00165">
    <property type="entry name" value="S4"/>
    <property type="match status" value="1"/>
</dbReference>
<dbReference type="FunFam" id="1.10.1050.10:FF:000001">
    <property type="entry name" value="30S ribosomal protein S4"/>
    <property type="match status" value="1"/>
</dbReference>
<dbReference type="FunFam" id="3.10.290.10:FF:000001">
    <property type="entry name" value="30S ribosomal protein S4"/>
    <property type="match status" value="1"/>
</dbReference>
<dbReference type="Gene3D" id="1.10.1050.10">
    <property type="entry name" value="Ribosomal Protein S4 Delta 41, Chain A, domain 1"/>
    <property type="match status" value="1"/>
</dbReference>
<dbReference type="Gene3D" id="3.10.290.10">
    <property type="entry name" value="RNA-binding S4 domain"/>
    <property type="match status" value="1"/>
</dbReference>
<dbReference type="HAMAP" id="MF_01306_B">
    <property type="entry name" value="Ribosomal_uS4_B"/>
    <property type="match status" value="1"/>
</dbReference>
<dbReference type="InterPro" id="IPR022801">
    <property type="entry name" value="Ribosomal_uS4"/>
</dbReference>
<dbReference type="InterPro" id="IPR005709">
    <property type="entry name" value="Ribosomal_uS4_bac-type"/>
</dbReference>
<dbReference type="InterPro" id="IPR018079">
    <property type="entry name" value="Ribosomal_uS4_CS"/>
</dbReference>
<dbReference type="InterPro" id="IPR001912">
    <property type="entry name" value="Ribosomal_uS4_N"/>
</dbReference>
<dbReference type="InterPro" id="IPR002942">
    <property type="entry name" value="S4_RNA-bd"/>
</dbReference>
<dbReference type="InterPro" id="IPR036986">
    <property type="entry name" value="S4_RNA-bd_sf"/>
</dbReference>
<dbReference type="NCBIfam" id="NF003717">
    <property type="entry name" value="PRK05327.1"/>
    <property type="match status" value="1"/>
</dbReference>
<dbReference type="NCBIfam" id="TIGR01017">
    <property type="entry name" value="rpsD_bact"/>
    <property type="match status" value="1"/>
</dbReference>
<dbReference type="PANTHER" id="PTHR11831">
    <property type="entry name" value="30S 40S RIBOSOMAL PROTEIN"/>
    <property type="match status" value="1"/>
</dbReference>
<dbReference type="PANTHER" id="PTHR11831:SF4">
    <property type="entry name" value="SMALL RIBOSOMAL SUBUNIT PROTEIN US4M"/>
    <property type="match status" value="1"/>
</dbReference>
<dbReference type="Pfam" id="PF00163">
    <property type="entry name" value="Ribosomal_S4"/>
    <property type="match status" value="1"/>
</dbReference>
<dbReference type="Pfam" id="PF01479">
    <property type="entry name" value="S4"/>
    <property type="match status" value="1"/>
</dbReference>
<dbReference type="SMART" id="SM01390">
    <property type="entry name" value="Ribosomal_S4"/>
    <property type="match status" value="1"/>
</dbReference>
<dbReference type="SMART" id="SM00363">
    <property type="entry name" value="S4"/>
    <property type="match status" value="1"/>
</dbReference>
<dbReference type="SUPFAM" id="SSF55174">
    <property type="entry name" value="Alpha-L RNA-binding motif"/>
    <property type="match status" value="1"/>
</dbReference>
<dbReference type="PROSITE" id="PS00632">
    <property type="entry name" value="RIBOSOMAL_S4"/>
    <property type="match status" value="1"/>
</dbReference>
<dbReference type="PROSITE" id="PS50889">
    <property type="entry name" value="S4"/>
    <property type="match status" value="1"/>
</dbReference>
<comment type="function">
    <text evidence="1">One of the primary rRNA binding proteins, it binds directly to 16S rRNA where it nucleates assembly of the body of the 30S subunit.</text>
</comment>
<comment type="function">
    <text evidence="1">With S5 and S12 plays an important role in translational accuracy.</text>
</comment>
<comment type="subunit">
    <text evidence="1">Part of the 30S ribosomal subunit. Contacts protein S5. The interaction surface between S4 and S5 is involved in control of translational fidelity.</text>
</comment>
<comment type="similarity">
    <text evidence="1">Belongs to the universal ribosomal protein uS4 family.</text>
</comment>
<keyword id="KW-0687">Ribonucleoprotein</keyword>
<keyword id="KW-0689">Ribosomal protein</keyword>
<keyword id="KW-0694">RNA-binding</keyword>
<keyword id="KW-0699">rRNA-binding</keyword>
<protein>
    <recommendedName>
        <fullName evidence="1">Small ribosomal subunit protein uS4</fullName>
    </recommendedName>
    <alternativeName>
        <fullName evidence="2">30S ribosomal protein S4</fullName>
    </alternativeName>
</protein>
<feature type="chain" id="PRO_1000085967" description="Small ribosomal subunit protein uS4">
    <location>
        <begin position="1"/>
        <end position="206"/>
    </location>
</feature>
<feature type="domain" description="S4 RNA-binding" evidence="1">
    <location>
        <begin position="98"/>
        <end position="163"/>
    </location>
</feature>
<evidence type="ECO:0000255" key="1">
    <source>
        <dbReference type="HAMAP-Rule" id="MF_01306"/>
    </source>
</evidence>
<evidence type="ECO:0000305" key="2"/>
<sequence>MARYTGATCRLCRREGMKLFLKGDRCFTDKCAFVRRSYAPGQHGANKKKVSNYGVQLREKQKARRIYGILEGQFRTYYEKAEHIKGITGENLLKLLEMRLDNIVYRLGYGSSRNEARQLVTHGHFLVNGKKVDICSYHVSVNDVITVCEKSRSSEKFKTFVENPKTLPKWLEANVDNYEGKVVAEPSREDIDVPVNETLIVELYSK</sequence>
<accession>A6LPT9</accession>
<organism>
    <name type="scientific">Clostridium beijerinckii (strain ATCC 51743 / NCIMB 8052)</name>
    <name type="common">Clostridium acetobutylicum</name>
    <dbReference type="NCBI Taxonomy" id="290402"/>
    <lineage>
        <taxon>Bacteria</taxon>
        <taxon>Bacillati</taxon>
        <taxon>Bacillota</taxon>
        <taxon>Clostridia</taxon>
        <taxon>Eubacteriales</taxon>
        <taxon>Clostridiaceae</taxon>
        <taxon>Clostridium</taxon>
    </lineage>
</organism>
<name>RS4_CLOB8</name>
<proteinExistence type="inferred from homology"/>